<gene>
    <name evidence="1" type="primary">slmA</name>
    <name type="ordered locus">Sputw3181_0335</name>
</gene>
<comment type="function">
    <text evidence="1">Required for nucleoid occlusion (NO) phenomenon, which prevents Z-ring formation and cell division over the nucleoid. Acts as a DNA-associated cell division inhibitor that binds simultaneously chromosomal DNA and FtsZ, and disrupts the assembly of FtsZ polymers. SlmA-DNA-binding sequences (SBS) are dispersed on non-Ter regions of the chromosome, preventing FtsZ polymerization at these regions.</text>
</comment>
<comment type="subunit">
    <text evidence="1">Homodimer. Interacts with FtsZ.</text>
</comment>
<comment type="subcellular location">
    <subcellularLocation>
        <location evidence="1">Cytoplasm</location>
        <location evidence="1">Nucleoid</location>
    </subcellularLocation>
</comment>
<comment type="similarity">
    <text evidence="1">Belongs to the nucleoid occlusion factor SlmA family.</text>
</comment>
<dbReference type="EMBL" id="CP000503">
    <property type="protein sequence ID" value="ABM23186.1"/>
    <property type="molecule type" value="Genomic_DNA"/>
</dbReference>
<dbReference type="RefSeq" id="WP_011787731.1">
    <property type="nucleotide sequence ID" value="NC_008750.1"/>
</dbReference>
<dbReference type="SMR" id="A1REU1"/>
<dbReference type="GeneID" id="67441918"/>
<dbReference type="KEGG" id="shw:Sputw3181_0335"/>
<dbReference type="HOGENOM" id="CLU_069356_5_0_6"/>
<dbReference type="Proteomes" id="UP000002597">
    <property type="component" value="Chromosome"/>
</dbReference>
<dbReference type="GO" id="GO:0043590">
    <property type="term" value="C:bacterial nucleoid"/>
    <property type="evidence" value="ECO:0007669"/>
    <property type="project" value="UniProtKB-UniRule"/>
</dbReference>
<dbReference type="GO" id="GO:0005737">
    <property type="term" value="C:cytoplasm"/>
    <property type="evidence" value="ECO:0007669"/>
    <property type="project" value="UniProtKB-UniRule"/>
</dbReference>
<dbReference type="GO" id="GO:0043565">
    <property type="term" value="F:sequence-specific DNA binding"/>
    <property type="evidence" value="ECO:0007669"/>
    <property type="project" value="UniProtKB-UniRule"/>
</dbReference>
<dbReference type="GO" id="GO:0051301">
    <property type="term" value="P:cell division"/>
    <property type="evidence" value="ECO:0007669"/>
    <property type="project" value="UniProtKB-KW"/>
</dbReference>
<dbReference type="GO" id="GO:0010974">
    <property type="term" value="P:negative regulation of division septum assembly"/>
    <property type="evidence" value="ECO:0007669"/>
    <property type="project" value="InterPro"/>
</dbReference>
<dbReference type="Gene3D" id="1.10.357.10">
    <property type="entry name" value="Tetracycline Repressor, domain 2"/>
    <property type="match status" value="1"/>
</dbReference>
<dbReference type="HAMAP" id="MF_01839">
    <property type="entry name" value="NO_factor_SlmA"/>
    <property type="match status" value="1"/>
</dbReference>
<dbReference type="InterPro" id="IPR009057">
    <property type="entry name" value="Homeodomain-like_sf"/>
</dbReference>
<dbReference type="InterPro" id="IPR050624">
    <property type="entry name" value="HTH-type_Tx_Regulator"/>
</dbReference>
<dbReference type="InterPro" id="IPR001647">
    <property type="entry name" value="HTH_TetR"/>
</dbReference>
<dbReference type="InterPro" id="IPR023769">
    <property type="entry name" value="NO_SlmA"/>
</dbReference>
<dbReference type="InterPro" id="IPR054580">
    <property type="entry name" value="SlmA-like_C"/>
</dbReference>
<dbReference type="NCBIfam" id="NF007015">
    <property type="entry name" value="PRK09480.1"/>
    <property type="match status" value="1"/>
</dbReference>
<dbReference type="PANTHER" id="PTHR43479">
    <property type="entry name" value="ACREF/ENVCD OPERON REPRESSOR-RELATED"/>
    <property type="match status" value="1"/>
</dbReference>
<dbReference type="PANTHER" id="PTHR43479:SF11">
    <property type="entry name" value="ACREF_ENVCD OPERON REPRESSOR-RELATED"/>
    <property type="match status" value="1"/>
</dbReference>
<dbReference type="Pfam" id="PF22276">
    <property type="entry name" value="SlmA-like_C"/>
    <property type="match status" value="1"/>
</dbReference>
<dbReference type="Pfam" id="PF00440">
    <property type="entry name" value="TetR_N"/>
    <property type="match status" value="1"/>
</dbReference>
<dbReference type="SUPFAM" id="SSF46689">
    <property type="entry name" value="Homeodomain-like"/>
    <property type="match status" value="1"/>
</dbReference>
<dbReference type="PROSITE" id="PS50977">
    <property type="entry name" value="HTH_TETR_2"/>
    <property type="match status" value="1"/>
</dbReference>
<proteinExistence type="inferred from homology"/>
<name>SLMA_SHESW</name>
<sequence length="197" mass="22695">MAVSPKINRREHILQCLAQMLETSPGQRITTAKLASEVGVSEAALYRHFPSKARMFEGLIEFIEESLLSRINIIMDDEKDTMKRCQLMLQLLLIFAERNPGISRVLNGDALLGENERLRSRISSLFAKIETQLKQILREKTLREGRGFNLDEAILANLLLAFAEGRIAQFVRSEFKLKPTTHFDEQWRFIQHQLLQS</sequence>
<feature type="chain" id="PRO_1000070534" description="Nucleoid occlusion factor SlmA">
    <location>
        <begin position="1"/>
        <end position="197"/>
    </location>
</feature>
<feature type="domain" description="HTH tetR-type" evidence="1">
    <location>
        <begin position="7"/>
        <end position="67"/>
    </location>
</feature>
<feature type="DNA-binding region" description="H-T-H motif" evidence="1">
    <location>
        <begin position="30"/>
        <end position="49"/>
    </location>
</feature>
<feature type="coiled-coil region" evidence="1">
    <location>
        <begin position="110"/>
        <end position="130"/>
    </location>
</feature>
<organism>
    <name type="scientific">Shewanella sp. (strain W3-18-1)</name>
    <dbReference type="NCBI Taxonomy" id="351745"/>
    <lineage>
        <taxon>Bacteria</taxon>
        <taxon>Pseudomonadati</taxon>
        <taxon>Pseudomonadota</taxon>
        <taxon>Gammaproteobacteria</taxon>
        <taxon>Alteromonadales</taxon>
        <taxon>Shewanellaceae</taxon>
        <taxon>Shewanella</taxon>
    </lineage>
</organism>
<accession>A1REU1</accession>
<evidence type="ECO:0000255" key="1">
    <source>
        <dbReference type="HAMAP-Rule" id="MF_01839"/>
    </source>
</evidence>
<reference key="1">
    <citation type="submission" date="2006-12" db="EMBL/GenBank/DDBJ databases">
        <title>Complete sequence of Shewanella sp. W3-18-1.</title>
        <authorList>
            <consortium name="US DOE Joint Genome Institute"/>
            <person name="Copeland A."/>
            <person name="Lucas S."/>
            <person name="Lapidus A."/>
            <person name="Barry K."/>
            <person name="Detter J.C."/>
            <person name="Glavina del Rio T."/>
            <person name="Hammon N."/>
            <person name="Israni S."/>
            <person name="Dalin E."/>
            <person name="Tice H."/>
            <person name="Pitluck S."/>
            <person name="Chain P."/>
            <person name="Malfatti S."/>
            <person name="Shin M."/>
            <person name="Vergez L."/>
            <person name="Schmutz J."/>
            <person name="Larimer F."/>
            <person name="Land M."/>
            <person name="Hauser L."/>
            <person name="Kyrpides N."/>
            <person name="Lykidis A."/>
            <person name="Tiedje J."/>
            <person name="Richardson P."/>
        </authorList>
    </citation>
    <scope>NUCLEOTIDE SEQUENCE [LARGE SCALE GENOMIC DNA]</scope>
    <source>
        <strain>W3-18-1</strain>
    </source>
</reference>
<keyword id="KW-0131">Cell cycle</keyword>
<keyword id="KW-0132">Cell division</keyword>
<keyword id="KW-0175">Coiled coil</keyword>
<keyword id="KW-0963">Cytoplasm</keyword>
<keyword id="KW-0238">DNA-binding</keyword>
<protein>
    <recommendedName>
        <fullName evidence="1">Nucleoid occlusion factor SlmA</fullName>
    </recommendedName>
</protein>